<keyword id="KW-0067">ATP-binding</keyword>
<keyword id="KW-0436">Ligase</keyword>
<keyword id="KW-0547">Nucleotide-binding</keyword>
<keyword id="KW-0658">Purine biosynthesis</keyword>
<sequence length="237" mass="26995">MQKQAELYRGKAKTVYSTENPDLLVLEFRNDTSAGDGARIEQFDRKGMVNNKFNYFIMSKLAEAGIPTQMERLLSDTECLVKKLDMVPVECVVRNRAAGSLVKRLGIEEGIELNPPLFDLFLKNDAMHDPMVNESYCETFGWVSKENLARMKELTYKANDVLKKLFDDAGLILVDFKLEFGLYKGEVVLGDEFSPDGSRLWDKETLEKMDKDRFRQSLGGLIEAYEAVARRLGVQLD</sequence>
<feature type="chain" id="PRO_1000122915" description="Phosphoribosylaminoimidazole-succinocarboxamide synthase">
    <location>
        <begin position="1"/>
        <end position="237"/>
    </location>
</feature>
<reference key="1">
    <citation type="journal article" date="2009" name="PLoS Genet.">
        <title>Organised genome dynamics in the Escherichia coli species results in highly diverse adaptive paths.</title>
        <authorList>
            <person name="Touchon M."/>
            <person name="Hoede C."/>
            <person name="Tenaillon O."/>
            <person name="Barbe V."/>
            <person name="Baeriswyl S."/>
            <person name="Bidet P."/>
            <person name="Bingen E."/>
            <person name="Bonacorsi S."/>
            <person name="Bouchier C."/>
            <person name="Bouvet O."/>
            <person name="Calteau A."/>
            <person name="Chiapello H."/>
            <person name="Clermont O."/>
            <person name="Cruveiller S."/>
            <person name="Danchin A."/>
            <person name="Diard M."/>
            <person name="Dossat C."/>
            <person name="Karoui M.E."/>
            <person name="Frapy E."/>
            <person name="Garry L."/>
            <person name="Ghigo J.M."/>
            <person name="Gilles A.M."/>
            <person name="Johnson J."/>
            <person name="Le Bouguenec C."/>
            <person name="Lescat M."/>
            <person name="Mangenot S."/>
            <person name="Martinez-Jehanne V."/>
            <person name="Matic I."/>
            <person name="Nassif X."/>
            <person name="Oztas S."/>
            <person name="Petit M.A."/>
            <person name="Pichon C."/>
            <person name="Rouy Z."/>
            <person name="Ruf C.S."/>
            <person name="Schneider D."/>
            <person name="Tourret J."/>
            <person name="Vacherie B."/>
            <person name="Vallenet D."/>
            <person name="Medigue C."/>
            <person name="Rocha E.P.C."/>
            <person name="Denamur E."/>
        </authorList>
    </citation>
    <scope>NUCLEOTIDE SEQUENCE [LARGE SCALE GENOMIC DNA]</scope>
    <source>
        <strain>ED1a</strain>
    </source>
</reference>
<dbReference type="EC" id="6.3.2.6" evidence="1"/>
<dbReference type="EMBL" id="CU928162">
    <property type="protein sequence ID" value="CAR09081.2"/>
    <property type="molecule type" value="Genomic_DNA"/>
</dbReference>
<dbReference type="RefSeq" id="WP_001295467.1">
    <property type="nucleotide sequence ID" value="NC_011745.1"/>
</dbReference>
<dbReference type="SMR" id="B7MYB5"/>
<dbReference type="GeneID" id="89517285"/>
<dbReference type="KEGG" id="ecq:ECED1_2911"/>
<dbReference type="HOGENOM" id="CLU_061495_2_1_6"/>
<dbReference type="UniPathway" id="UPA00074">
    <property type="reaction ID" value="UER00131"/>
</dbReference>
<dbReference type="Proteomes" id="UP000000748">
    <property type="component" value="Chromosome"/>
</dbReference>
<dbReference type="GO" id="GO:0005829">
    <property type="term" value="C:cytosol"/>
    <property type="evidence" value="ECO:0007669"/>
    <property type="project" value="TreeGrafter"/>
</dbReference>
<dbReference type="GO" id="GO:0005524">
    <property type="term" value="F:ATP binding"/>
    <property type="evidence" value="ECO:0007669"/>
    <property type="project" value="UniProtKB-KW"/>
</dbReference>
<dbReference type="GO" id="GO:0004639">
    <property type="term" value="F:phosphoribosylaminoimidazolesuccinocarboxamide synthase activity"/>
    <property type="evidence" value="ECO:0007669"/>
    <property type="project" value="UniProtKB-UniRule"/>
</dbReference>
<dbReference type="GO" id="GO:0006189">
    <property type="term" value="P:'de novo' IMP biosynthetic process"/>
    <property type="evidence" value="ECO:0007669"/>
    <property type="project" value="UniProtKB-UniRule"/>
</dbReference>
<dbReference type="GO" id="GO:0009236">
    <property type="term" value="P:cobalamin biosynthetic process"/>
    <property type="evidence" value="ECO:0007669"/>
    <property type="project" value="InterPro"/>
</dbReference>
<dbReference type="CDD" id="cd01415">
    <property type="entry name" value="SAICAR_synt_PurC"/>
    <property type="match status" value="1"/>
</dbReference>
<dbReference type="FunFam" id="3.30.200.20:FF:000086">
    <property type="entry name" value="Phosphoribosylaminoimidazole-succinocarboxamide synthase"/>
    <property type="match status" value="1"/>
</dbReference>
<dbReference type="FunFam" id="3.30.470.20:FF:000006">
    <property type="entry name" value="Phosphoribosylaminoimidazole-succinocarboxamide synthase"/>
    <property type="match status" value="1"/>
</dbReference>
<dbReference type="Gene3D" id="3.30.470.20">
    <property type="entry name" value="ATP-grasp fold, B domain"/>
    <property type="match status" value="1"/>
</dbReference>
<dbReference type="Gene3D" id="3.30.200.20">
    <property type="entry name" value="Phosphorylase Kinase, domain 1"/>
    <property type="match status" value="1"/>
</dbReference>
<dbReference type="HAMAP" id="MF_00137">
    <property type="entry name" value="SAICAR_synth"/>
    <property type="match status" value="1"/>
</dbReference>
<dbReference type="InterPro" id="IPR028923">
    <property type="entry name" value="SAICAR_synt/ADE2_N"/>
</dbReference>
<dbReference type="InterPro" id="IPR033934">
    <property type="entry name" value="SAICAR_synt_PurC"/>
</dbReference>
<dbReference type="InterPro" id="IPR001636">
    <property type="entry name" value="SAICAR_synth"/>
</dbReference>
<dbReference type="InterPro" id="IPR050089">
    <property type="entry name" value="SAICAR_synthetase"/>
</dbReference>
<dbReference type="InterPro" id="IPR018236">
    <property type="entry name" value="SAICAR_synthetase_CS"/>
</dbReference>
<dbReference type="NCBIfam" id="TIGR00081">
    <property type="entry name" value="purC"/>
    <property type="match status" value="1"/>
</dbReference>
<dbReference type="PANTHER" id="PTHR43599">
    <property type="entry name" value="MULTIFUNCTIONAL PROTEIN ADE2"/>
    <property type="match status" value="1"/>
</dbReference>
<dbReference type="PANTHER" id="PTHR43599:SF3">
    <property type="entry name" value="SI:DKEY-6E2.2"/>
    <property type="match status" value="1"/>
</dbReference>
<dbReference type="Pfam" id="PF01259">
    <property type="entry name" value="SAICAR_synt"/>
    <property type="match status" value="1"/>
</dbReference>
<dbReference type="SUPFAM" id="SSF56104">
    <property type="entry name" value="SAICAR synthase-like"/>
    <property type="match status" value="1"/>
</dbReference>
<dbReference type="PROSITE" id="PS01057">
    <property type="entry name" value="SAICAR_SYNTHETASE_1"/>
    <property type="match status" value="1"/>
</dbReference>
<dbReference type="PROSITE" id="PS01058">
    <property type="entry name" value="SAICAR_SYNTHETASE_2"/>
    <property type="match status" value="1"/>
</dbReference>
<gene>
    <name evidence="1" type="primary">purC</name>
    <name type="ordered locus">ECED1_2911</name>
</gene>
<organism>
    <name type="scientific">Escherichia coli O81 (strain ED1a)</name>
    <dbReference type="NCBI Taxonomy" id="585397"/>
    <lineage>
        <taxon>Bacteria</taxon>
        <taxon>Pseudomonadati</taxon>
        <taxon>Pseudomonadota</taxon>
        <taxon>Gammaproteobacteria</taxon>
        <taxon>Enterobacterales</taxon>
        <taxon>Enterobacteriaceae</taxon>
        <taxon>Escherichia</taxon>
    </lineage>
</organism>
<evidence type="ECO:0000255" key="1">
    <source>
        <dbReference type="HAMAP-Rule" id="MF_00137"/>
    </source>
</evidence>
<proteinExistence type="inferred from homology"/>
<name>PUR7_ECO81</name>
<accession>B7MYB5</accession>
<protein>
    <recommendedName>
        <fullName evidence="1">Phosphoribosylaminoimidazole-succinocarboxamide synthase</fullName>
        <ecNumber evidence="1">6.3.2.6</ecNumber>
    </recommendedName>
    <alternativeName>
        <fullName evidence="1">SAICAR synthetase</fullName>
    </alternativeName>
</protein>
<comment type="catalytic activity">
    <reaction evidence="1">
        <text>5-amino-1-(5-phospho-D-ribosyl)imidazole-4-carboxylate + L-aspartate + ATP = (2S)-2-[5-amino-1-(5-phospho-beta-D-ribosyl)imidazole-4-carboxamido]succinate + ADP + phosphate + 2 H(+)</text>
        <dbReference type="Rhea" id="RHEA:22628"/>
        <dbReference type="ChEBI" id="CHEBI:15378"/>
        <dbReference type="ChEBI" id="CHEBI:29991"/>
        <dbReference type="ChEBI" id="CHEBI:30616"/>
        <dbReference type="ChEBI" id="CHEBI:43474"/>
        <dbReference type="ChEBI" id="CHEBI:58443"/>
        <dbReference type="ChEBI" id="CHEBI:77657"/>
        <dbReference type="ChEBI" id="CHEBI:456216"/>
        <dbReference type="EC" id="6.3.2.6"/>
    </reaction>
</comment>
<comment type="pathway">
    <text evidence="1">Purine metabolism; IMP biosynthesis via de novo pathway; 5-amino-1-(5-phospho-D-ribosyl)imidazole-4-carboxamide from 5-amino-1-(5-phospho-D-ribosyl)imidazole-4-carboxylate: step 1/2.</text>
</comment>
<comment type="similarity">
    <text evidence="1">Belongs to the SAICAR synthetase family.</text>
</comment>